<name>PUR9_PROM3</name>
<reference key="1">
    <citation type="journal article" date="2007" name="PLoS Genet.">
        <title>Patterns and implications of gene gain and loss in the evolution of Prochlorococcus.</title>
        <authorList>
            <person name="Kettler G.C."/>
            <person name="Martiny A.C."/>
            <person name="Huang K."/>
            <person name="Zucker J."/>
            <person name="Coleman M.L."/>
            <person name="Rodrigue S."/>
            <person name="Chen F."/>
            <person name="Lapidus A."/>
            <person name="Ferriera S."/>
            <person name="Johnson J."/>
            <person name="Steglich C."/>
            <person name="Church G.M."/>
            <person name="Richardson P."/>
            <person name="Chisholm S.W."/>
        </authorList>
    </citation>
    <scope>NUCLEOTIDE SEQUENCE [LARGE SCALE GENOMIC DNA]</scope>
    <source>
        <strain>MIT 9303</strain>
    </source>
</reference>
<accession>A2CCK6</accession>
<comment type="catalytic activity">
    <reaction evidence="1">
        <text>(6R)-10-formyltetrahydrofolate + 5-amino-1-(5-phospho-beta-D-ribosyl)imidazole-4-carboxamide = 5-formamido-1-(5-phospho-D-ribosyl)imidazole-4-carboxamide + (6S)-5,6,7,8-tetrahydrofolate</text>
        <dbReference type="Rhea" id="RHEA:22192"/>
        <dbReference type="ChEBI" id="CHEBI:57453"/>
        <dbReference type="ChEBI" id="CHEBI:58467"/>
        <dbReference type="ChEBI" id="CHEBI:58475"/>
        <dbReference type="ChEBI" id="CHEBI:195366"/>
        <dbReference type="EC" id="2.1.2.3"/>
    </reaction>
</comment>
<comment type="catalytic activity">
    <reaction evidence="1">
        <text>IMP + H2O = 5-formamido-1-(5-phospho-D-ribosyl)imidazole-4-carboxamide</text>
        <dbReference type="Rhea" id="RHEA:18445"/>
        <dbReference type="ChEBI" id="CHEBI:15377"/>
        <dbReference type="ChEBI" id="CHEBI:58053"/>
        <dbReference type="ChEBI" id="CHEBI:58467"/>
        <dbReference type="EC" id="3.5.4.10"/>
    </reaction>
</comment>
<comment type="pathway">
    <text evidence="1">Purine metabolism; IMP biosynthesis via de novo pathway; 5-formamido-1-(5-phospho-D-ribosyl)imidazole-4-carboxamide from 5-amino-1-(5-phospho-D-ribosyl)imidazole-4-carboxamide (10-formyl THF route): step 1/1.</text>
</comment>
<comment type="pathway">
    <text evidence="1">Purine metabolism; IMP biosynthesis via de novo pathway; IMP from 5-formamido-1-(5-phospho-D-ribosyl)imidazole-4-carboxamide: step 1/1.</text>
</comment>
<comment type="domain">
    <text evidence="1">The IMP cyclohydrolase activity resides in the N-terminal region.</text>
</comment>
<comment type="similarity">
    <text evidence="1">Belongs to the PurH family.</text>
</comment>
<dbReference type="EC" id="2.1.2.3" evidence="1"/>
<dbReference type="EC" id="3.5.4.10" evidence="1"/>
<dbReference type="EMBL" id="CP000554">
    <property type="protein sequence ID" value="ABM79216.1"/>
    <property type="molecule type" value="Genomic_DNA"/>
</dbReference>
<dbReference type="RefSeq" id="WP_011827065.1">
    <property type="nucleotide sequence ID" value="NC_008820.1"/>
</dbReference>
<dbReference type="SMR" id="A2CCK6"/>
<dbReference type="STRING" id="59922.P9303_24851"/>
<dbReference type="KEGG" id="pmf:P9303_24851"/>
<dbReference type="HOGENOM" id="CLU_016316_5_2_3"/>
<dbReference type="BioCyc" id="PMAR59922:G1G80-2174-MONOMER"/>
<dbReference type="UniPathway" id="UPA00074">
    <property type="reaction ID" value="UER00133"/>
</dbReference>
<dbReference type="UniPathway" id="UPA00074">
    <property type="reaction ID" value="UER00135"/>
</dbReference>
<dbReference type="Proteomes" id="UP000002274">
    <property type="component" value="Chromosome"/>
</dbReference>
<dbReference type="GO" id="GO:0005829">
    <property type="term" value="C:cytosol"/>
    <property type="evidence" value="ECO:0007669"/>
    <property type="project" value="TreeGrafter"/>
</dbReference>
<dbReference type="GO" id="GO:0003937">
    <property type="term" value="F:IMP cyclohydrolase activity"/>
    <property type="evidence" value="ECO:0007669"/>
    <property type="project" value="UniProtKB-UniRule"/>
</dbReference>
<dbReference type="GO" id="GO:0004643">
    <property type="term" value="F:phosphoribosylaminoimidazolecarboxamide formyltransferase activity"/>
    <property type="evidence" value="ECO:0007669"/>
    <property type="project" value="UniProtKB-UniRule"/>
</dbReference>
<dbReference type="GO" id="GO:0006189">
    <property type="term" value="P:'de novo' IMP biosynthetic process"/>
    <property type="evidence" value="ECO:0007669"/>
    <property type="project" value="UniProtKB-UniRule"/>
</dbReference>
<dbReference type="CDD" id="cd01421">
    <property type="entry name" value="IMPCH"/>
    <property type="match status" value="1"/>
</dbReference>
<dbReference type="FunFam" id="3.40.140.20:FF:000001">
    <property type="entry name" value="Bifunctional purine biosynthesis protein PurH"/>
    <property type="match status" value="1"/>
</dbReference>
<dbReference type="FunFam" id="3.40.50.1380:FF:000001">
    <property type="entry name" value="Bifunctional purine biosynthesis protein PurH"/>
    <property type="match status" value="1"/>
</dbReference>
<dbReference type="Gene3D" id="3.40.140.20">
    <property type="match status" value="2"/>
</dbReference>
<dbReference type="Gene3D" id="3.40.50.1380">
    <property type="entry name" value="Methylglyoxal synthase-like domain"/>
    <property type="match status" value="1"/>
</dbReference>
<dbReference type="HAMAP" id="MF_00139">
    <property type="entry name" value="PurH"/>
    <property type="match status" value="1"/>
</dbReference>
<dbReference type="InterPro" id="IPR024051">
    <property type="entry name" value="AICAR_Tfase_dup_dom_sf"/>
</dbReference>
<dbReference type="InterPro" id="IPR016193">
    <property type="entry name" value="Cytidine_deaminase-like"/>
</dbReference>
<dbReference type="InterPro" id="IPR011607">
    <property type="entry name" value="MGS-like_dom"/>
</dbReference>
<dbReference type="InterPro" id="IPR036914">
    <property type="entry name" value="MGS-like_dom_sf"/>
</dbReference>
<dbReference type="InterPro" id="IPR002695">
    <property type="entry name" value="PurH-like"/>
</dbReference>
<dbReference type="NCBIfam" id="NF002049">
    <property type="entry name" value="PRK00881.1"/>
    <property type="match status" value="1"/>
</dbReference>
<dbReference type="NCBIfam" id="TIGR00355">
    <property type="entry name" value="purH"/>
    <property type="match status" value="1"/>
</dbReference>
<dbReference type="PANTHER" id="PTHR11692:SF0">
    <property type="entry name" value="BIFUNCTIONAL PURINE BIOSYNTHESIS PROTEIN ATIC"/>
    <property type="match status" value="1"/>
</dbReference>
<dbReference type="PANTHER" id="PTHR11692">
    <property type="entry name" value="BIFUNCTIONAL PURINE BIOSYNTHESIS PROTEIN PURH"/>
    <property type="match status" value="1"/>
</dbReference>
<dbReference type="Pfam" id="PF01808">
    <property type="entry name" value="AICARFT_IMPCHas"/>
    <property type="match status" value="1"/>
</dbReference>
<dbReference type="Pfam" id="PF02142">
    <property type="entry name" value="MGS"/>
    <property type="match status" value="1"/>
</dbReference>
<dbReference type="PIRSF" id="PIRSF000414">
    <property type="entry name" value="AICARFT_IMPCHas"/>
    <property type="match status" value="1"/>
</dbReference>
<dbReference type="SMART" id="SM00798">
    <property type="entry name" value="AICARFT_IMPCHas"/>
    <property type="match status" value="1"/>
</dbReference>
<dbReference type="SMART" id="SM00851">
    <property type="entry name" value="MGS"/>
    <property type="match status" value="1"/>
</dbReference>
<dbReference type="SUPFAM" id="SSF53927">
    <property type="entry name" value="Cytidine deaminase-like"/>
    <property type="match status" value="1"/>
</dbReference>
<dbReference type="SUPFAM" id="SSF52335">
    <property type="entry name" value="Methylglyoxal synthase-like"/>
    <property type="match status" value="1"/>
</dbReference>
<dbReference type="PROSITE" id="PS51855">
    <property type="entry name" value="MGS"/>
    <property type="match status" value="1"/>
</dbReference>
<proteinExistence type="inferred from homology"/>
<keyword id="KW-0378">Hydrolase</keyword>
<keyword id="KW-0511">Multifunctional enzyme</keyword>
<keyword id="KW-0658">Purine biosynthesis</keyword>
<keyword id="KW-0808">Transferase</keyword>
<evidence type="ECO:0000255" key="1">
    <source>
        <dbReference type="HAMAP-Rule" id="MF_00139"/>
    </source>
</evidence>
<evidence type="ECO:0000255" key="2">
    <source>
        <dbReference type="PROSITE-ProRule" id="PRU01202"/>
    </source>
</evidence>
<organism>
    <name type="scientific">Prochlorococcus marinus (strain MIT 9303)</name>
    <dbReference type="NCBI Taxonomy" id="59922"/>
    <lineage>
        <taxon>Bacteria</taxon>
        <taxon>Bacillati</taxon>
        <taxon>Cyanobacteriota</taxon>
        <taxon>Cyanophyceae</taxon>
        <taxon>Synechococcales</taxon>
        <taxon>Prochlorococcaceae</taxon>
        <taxon>Prochlorococcus</taxon>
    </lineage>
</organism>
<sequence length="517" mass="55150">MAPIALLSVSNKHGIVSLAESLHRMHGFQLLSSGGTAKVLEDAGLPVTRVAEHTGAAEILGGRVKTLHPRVHGGILAMRGDPDHEVDLEQHQIPPIDVVVVNLYPFRETVANPQVSWETAIENIDIGGPAMVRAAAKNHAHVAVLTRPDQYDRFLVALSDGVDGQLRRELALEAFEHTAAYDVAISHWMGVRLSEQASQWLEAIPLRQRLRYGENPHQQAAWYSAPKQGWGGAIQLQGKELSTNNLLDLEAALATVREFGYGTDGAHQAVQDAAVVVKHTNPCGVAIGTGVASALSRALDADRVSAFGGIVALNGLVDATTARELTSLFLECVVAPGFEPEAREILASKANLRLLELAPGAVDAAGRDHIRTILGGVLVQDQDDQLIDPTSWTVASKRAPTAEENDDLTFAWRLVRHVRSNAIVVARAGQSLGVGAGQMNRVGSARLALEAAGDQARGAVLASDGFFPFDDTVRLAANHGIRAVIQPGGSKRDADSIAVCDEFGLAMVLTGKRHFLH</sequence>
<gene>
    <name evidence="1" type="primary">purH</name>
    <name type="ordered locus">P9303_24851</name>
</gene>
<feature type="chain" id="PRO_1000018927" description="Bifunctional purine biosynthesis protein PurH">
    <location>
        <begin position="1"/>
        <end position="517"/>
    </location>
</feature>
<feature type="domain" description="MGS-like" evidence="2">
    <location>
        <begin position="1"/>
        <end position="146"/>
    </location>
</feature>
<protein>
    <recommendedName>
        <fullName evidence="1">Bifunctional purine biosynthesis protein PurH</fullName>
    </recommendedName>
    <domain>
        <recommendedName>
            <fullName evidence="1">Phosphoribosylaminoimidazolecarboxamide formyltransferase</fullName>
            <ecNumber evidence="1">2.1.2.3</ecNumber>
        </recommendedName>
        <alternativeName>
            <fullName evidence="1">AICAR transformylase</fullName>
        </alternativeName>
    </domain>
    <domain>
        <recommendedName>
            <fullName evidence="1">IMP cyclohydrolase</fullName>
            <ecNumber evidence="1">3.5.4.10</ecNumber>
        </recommendedName>
        <alternativeName>
            <fullName evidence="1">ATIC</fullName>
        </alternativeName>
        <alternativeName>
            <fullName evidence="1">IMP synthase</fullName>
        </alternativeName>
        <alternativeName>
            <fullName evidence="1">Inosinicase</fullName>
        </alternativeName>
    </domain>
</protein>